<reference key="1">
    <citation type="journal article" date="2009" name="BMC Microbiol.">
        <title>The genome sequence of Geobacter metallireducens: features of metabolism, physiology and regulation common and dissimilar to Geobacter sulfurreducens.</title>
        <authorList>
            <person name="Aklujkar M."/>
            <person name="Krushkal J."/>
            <person name="DiBartolo G."/>
            <person name="Lapidus A."/>
            <person name="Land M.L."/>
            <person name="Lovley D.R."/>
        </authorList>
    </citation>
    <scope>NUCLEOTIDE SEQUENCE [LARGE SCALE GENOMIC DNA]</scope>
    <source>
        <strain>ATCC 53774 / DSM 7210 / GS-15</strain>
    </source>
</reference>
<protein>
    <recommendedName>
        <fullName evidence="1">DNA replication and repair protein RecF</fullName>
    </recommendedName>
</protein>
<keyword id="KW-0067">ATP-binding</keyword>
<keyword id="KW-0963">Cytoplasm</keyword>
<keyword id="KW-0227">DNA damage</keyword>
<keyword id="KW-0234">DNA repair</keyword>
<keyword id="KW-0235">DNA replication</keyword>
<keyword id="KW-0238">DNA-binding</keyword>
<keyword id="KW-0547">Nucleotide-binding</keyword>
<keyword id="KW-1185">Reference proteome</keyword>
<keyword id="KW-0742">SOS response</keyword>
<proteinExistence type="inferred from homology"/>
<sequence length="365" mass="41043">MFVTKIQISSFRNIAAAEIRFDRRFNVLHGANGQGKTSVLEAIYLLGTMKSFRLAKTPDLVSWNTPHALLRGWAERDGVGREIALYLGKEGRKARVDQKPVTRLADFFGNVNAVVFSPEEIAMARSGPDLRRRYLDRAIFSGDLGYLLLHHEYHRLLKQRNALLKRGSREGLDIWTGQLAEAGTRLMVKRMGYLAEIEPLVQRFYREIAGGEEEAGLAYRPHLTTPDLVSREGTDALLALFGAHEAEELRRGTTVVGPHRDDVDFVLNGRVIRTHGSQGQQRSFVLALKMAEIEYLERLNDAPPVLLLDDISSELDPQRNANLMTFLREKRMQVFITTTDVSTLRLAGIATHASFHVSRGTVTPL</sequence>
<organism>
    <name type="scientific">Geobacter metallireducens (strain ATCC 53774 / DSM 7210 / GS-15)</name>
    <dbReference type="NCBI Taxonomy" id="269799"/>
    <lineage>
        <taxon>Bacteria</taxon>
        <taxon>Pseudomonadati</taxon>
        <taxon>Thermodesulfobacteriota</taxon>
        <taxon>Desulfuromonadia</taxon>
        <taxon>Geobacterales</taxon>
        <taxon>Geobacteraceae</taxon>
        <taxon>Geobacter</taxon>
    </lineage>
</organism>
<accession>Q39ZS1</accession>
<name>RECF_GEOMG</name>
<gene>
    <name evidence="1" type="primary">recF</name>
    <name type="ordered locus">Gmet_0003</name>
</gene>
<feature type="chain" id="PRO_0000236119" description="DNA replication and repair protein RecF">
    <location>
        <begin position="1"/>
        <end position="365"/>
    </location>
</feature>
<feature type="binding site" evidence="1">
    <location>
        <begin position="30"/>
        <end position="37"/>
    </location>
    <ligand>
        <name>ATP</name>
        <dbReference type="ChEBI" id="CHEBI:30616"/>
    </ligand>
</feature>
<evidence type="ECO:0000255" key="1">
    <source>
        <dbReference type="HAMAP-Rule" id="MF_00365"/>
    </source>
</evidence>
<dbReference type="EMBL" id="CP000148">
    <property type="protein sequence ID" value="ABB30253.1"/>
    <property type="molecule type" value="Genomic_DNA"/>
</dbReference>
<dbReference type="RefSeq" id="WP_004513722.1">
    <property type="nucleotide sequence ID" value="NC_007517.1"/>
</dbReference>
<dbReference type="SMR" id="Q39ZS1"/>
<dbReference type="STRING" id="269799.Gmet_0003"/>
<dbReference type="KEGG" id="gme:Gmet_0003"/>
<dbReference type="eggNOG" id="COG1195">
    <property type="taxonomic scope" value="Bacteria"/>
</dbReference>
<dbReference type="HOGENOM" id="CLU_040267_0_1_7"/>
<dbReference type="Proteomes" id="UP000007073">
    <property type="component" value="Chromosome"/>
</dbReference>
<dbReference type="GO" id="GO:0005737">
    <property type="term" value="C:cytoplasm"/>
    <property type="evidence" value="ECO:0007669"/>
    <property type="project" value="UniProtKB-SubCell"/>
</dbReference>
<dbReference type="GO" id="GO:0005524">
    <property type="term" value="F:ATP binding"/>
    <property type="evidence" value="ECO:0007669"/>
    <property type="project" value="UniProtKB-UniRule"/>
</dbReference>
<dbReference type="GO" id="GO:0003697">
    <property type="term" value="F:single-stranded DNA binding"/>
    <property type="evidence" value="ECO:0007669"/>
    <property type="project" value="UniProtKB-UniRule"/>
</dbReference>
<dbReference type="GO" id="GO:0006260">
    <property type="term" value="P:DNA replication"/>
    <property type="evidence" value="ECO:0007669"/>
    <property type="project" value="UniProtKB-UniRule"/>
</dbReference>
<dbReference type="GO" id="GO:0000731">
    <property type="term" value="P:DNA synthesis involved in DNA repair"/>
    <property type="evidence" value="ECO:0007669"/>
    <property type="project" value="TreeGrafter"/>
</dbReference>
<dbReference type="GO" id="GO:0006302">
    <property type="term" value="P:double-strand break repair"/>
    <property type="evidence" value="ECO:0007669"/>
    <property type="project" value="TreeGrafter"/>
</dbReference>
<dbReference type="GO" id="GO:0009432">
    <property type="term" value="P:SOS response"/>
    <property type="evidence" value="ECO:0007669"/>
    <property type="project" value="UniProtKB-UniRule"/>
</dbReference>
<dbReference type="Gene3D" id="3.40.50.300">
    <property type="entry name" value="P-loop containing nucleotide triphosphate hydrolases"/>
    <property type="match status" value="1"/>
</dbReference>
<dbReference type="Gene3D" id="1.20.1050.90">
    <property type="entry name" value="RecF/RecN/SMC, N-terminal domain"/>
    <property type="match status" value="1"/>
</dbReference>
<dbReference type="HAMAP" id="MF_00365">
    <property type="entry name" value="RecF"/>
    <property type="match status" value="1"/>
</dbReference>
<dbReference type="InterPro" id="IPR001238">
    <property type="entry name" value="DNA-binding_RecF"/>
</dbReference>
<dbReference type="InterPro" id="IPR018078">
    <property type="entry name" value="DNA-binding_RecF_CS"/>
</dbReference>
<dbReference type="InterPro" id="IPR027417">
    <property type="entry name" value="P-loop_NTPase"/>
</dbReference>
<dbReference type="InterPro" id="IPR003395">
    <property type="entry name" value="RecF/RecN/SMC_N"/>
</dbReference>
<dbReference type="InterPro" id="IPR042174">
    <property type="entry name" value="RecF_2"/>
</dbReference>
<dbReference type="NCBIfam" id="TIGR00611">
    <property type="entry name" value="recf"/>
    <property type="match status" value="1"/>
</dbReference>
<dbReference type="PANTHER" id="PTHR32182">
    <property type="entry name" value="DNA REPLICATION AND REPAIR PROTEIN RECF"/>
    <property type="match status" value="1"/>
</dbReference>
<dbReference type="PANTHER" id="PTHR32182:SF0">
    <property type="entry name" value="DNA REPLICATION AND REPAIR PROTEIN RECF"/>
    <property type="match status" value="1"/>
</dbReference>
<dbReference type="Pfam" id="PF02463">
    <property type="entry name" value="SMC_N"/>
    <property type="match status" value="1"/>
</dbReference>
<dbReference type="SUPFAM" id="SSF52540">
    <property type="entry name" value="P-loop containing nucleoside triphosphate hydrolases"/>
    <property type="match status" value="1"/>
</dbReference>
<dbReference type="PROSITE" id="PS00618">
    <property type="entry name" value="RECF_2"/>
    <property type="match status" value="1"/>
</dbReference>
<comment type="function">
    <text evidence="1">The RecF protein is involved in DNA metabolism; it is required for DNA replication and normal SOS inducibility. RecF binds preferentially to single-stranded, linear DNA. It also seems to bind ATP.</text>
</comment>
<comment type="subcellular location">
    <subcellularLocation>
        <location evidence="1">Cytoplasm</location>
    </subcellularLocation>
</comment>
<comment type="similarity">
    <text evidence="1">Belongs to the RecF family.</text>
</comment>